<comment type="function">
    <text evidence="1">Acts as a processive, ATP-dependent zinc metallopeptidase for both cytoplasmic and membrane proteins. Plays a role in the quality control of integral membrane proteins.</text>
</comment>
<comment type="cofactor">
    <cofactor evidence="1">
        <name>Zn(2+)</name>
        <dbReference type="ChEBI" id="CHEBI:29105"/>
    </cofactor>
    <text evidence="1">Binds 1 zinc ion per subunit.</text>
</comment>
<comment type="subunit">
    <text evidence="1">Homohexamer.</text>
</comment>
<comment type="subcellular location">
    <subcellularLocation>
        <location evidence="1">Cell inner membrane</location>
        <topology evidence="1">Multi-pass membrane protein</topology>
        <orientation evidence="1">Cytoplasmic side</orientation>
    </subcellularLocation>
</comment>
<comment type="similarity">
    <text evidence="1">In the central section; belongs to the AAA ATPase family.</text>
</comment>
<comment type="similarity">
    <text evidence="1">In the C-terminal section; belongs to the peptidase M41 family.</text>
</comment>
<proteinExistence type="inferred from homology"/>
<gene>
    <name evidence="1" type="primary">ftsH</name>
    <name type="ordered locus">Sfum_3197</name>
</gene>
<organism>
    <name type="scientific">Syntrophobacter fumaroxidans (strain DSM 10017 / MPOB)</name>
    <dbReference type="NCBI Taxonomy" id="335543"/>
    <lineage>
        <taxon>Bacteria</taxon>
        <taxon>Pseudomonadati</taxon>
        <taxon>Thermodesulfobacteriota</taxon>
        <taxon>Syntrophobacteria</taxon>
        <taxon>Syntrophobacterales</taxon>
        <taxon>Syntrophobacteraceae</taxon>
        <taxon>Syntrophobacter</taxon>
    </lineage>
</organism>
<protein>
    <recommendedName>
        <fullName evidence="1">ATP-dependent zinc metalloprotease FtsH</fullName>
        <ecNumber evidence="1">3.4.24.-</ecNumber>
    </recommendedName>
</protein>
<keyword id="KW-0067">ATP-binding</keyword>
<keyword id="KW-0997">Cell inner membrane</keyword>
<keyword id="KW-1003">Cell membrane</keyword>
<keyword id="KW-0378">Hydrolase</keyword>
<keyword id="KW-0472">Membrane</keyword>
<keyword id="KW-0479">Metal-binding</keyword>
<keyword id="KW-0482">Metalloprotease</keyword>
<keyword id="KW-0547">Nucleotide-binding</keyword>
<keyword id="KW-0645">Protease</keyword>
<keyword id="KW-1185">Reference proteome</keyword>
<keyword id="KW-0812">Transmembrane</keyword>
<keyword id="KW-1133">Transmembrane helix</keyword>
<keyword id="KW-0862">Zinc</keyword>
<reference key="1">
    <citation type="submission" date="2006-10" db="EMBL/GenBank/DDBJ databases">
        <title>Complete sequence of Syntrophobacter fumaroxidans MPOB.</title>
        <authorList>
            <consortium name="US DOE Joint Genome Institute"/>
            <person name="Copeland A."/>
            <person name="Lucas S."/>
            <person name="Lapidus A."/>
            <person name="Barry K."/>
            <person name="Detter J.C."/>
            <person name="Glavina del Rio T."/>
            <person name="Hammon N."/>
            <person name="Israni S."/>
            <person name="Pitluck S."/>
            <person name="Goltsman E.G."/>
            <person name="Martinez M."/>
            <person name="Schmutz J."/>
            <person name="Larimer F."/>
            <person name="Land M."/>
            <person name="Hauser L."/>
            <person name="Kyrpides N."/>
            <person name="Kim E."/>
            <person name="Boone D.R."/>
            <person name="Brockman F."/>
            <person name="Culley D."/>
            <person name="Ferry J."/>
            <person name="Gunsalus R."/>
            <person name="McInerney M.J."/>
            <person name="Morrison M."/>
            <person name="Plugge C."/>
            <person name="Rohlin L."/>
            <person name="Scholten J."/>
            <person name="Sieber J."/>
            <person name="Stams A.J.M."/>
            <person name="Worm P."/>
            <person name="Henstra A.M."/>
            <person name="Richardson P."/>
        </authorList>
    </citation>
    <scope>NUCLEOTIDE SEQUENCE [LARGE SCALE GENOMIC DNA]</scope>
    <source>
        <strain>DSM 10017 / MPOB</strain>
    </source>
</reference>
<dbReference type="EC" id="3.4.24.-" evidence="1"/>
<dbReference type="EMBL" id="CP000478">
    <property type="protein sequence ID" value="ABK18870.1"/>
    <property type="molecule type" value="Genomic_DNA"/>
</dbReference>
<dbReference type="RefSeq" id="WP_011699995.1">
    <property type="nucleotide sequence ID" value="NC_008554.1"/>
</dbReference>
<dbReference type="SMR" id="A0LN68"/>
<dbReference type="STRING" id="335543.Sfum_3197"/>
<dbReference type="MEROPS" id="M41.021"/>
<dbReference type="KEGG" id="sfu:Sfum_3197"/>
<dbReference type="eggNOG" id="COG0465">
    <property type="taxonomic scope" value="Bacteria"/>
</dbReference>
<dbReference type="HOGENOM" id="CLU_000688_16_2_7"/>
<dbReference type="InParanoid" id="A0LN68"/>
<dbReference type="OrthoDB" id="9809379at2"/>
<dbReference type="Proteomes" id="UP000001784">
    <property type="component" value="Chromosome"/>
</dbReference>
<dbReference type="GO" id="GO:0005886">
    <property type="term" value="C:plasma membrane"/>
    <property type="evidence" value="ECO:0007669"/>
    <property type="project" value="UniProtKB-SubCell"/>
</dbReference>
<dbReference type="GO" id="GO:0005524">
    <property type="term" value="F:ATP binding"/>
    <property type="evidence" value="ECO:0007669"/>
    <property type="project" value="UniProtKB-UniRule"/>
</dbReference>
<dbReference type="GO" id="GO:0016887">
    <property type="term" value="F:ATP hydrolysis activity"/>
    <property type="evidence" value="ECO:0007669"/>
    <property type="project" value="UniProtKB-UniRule"/>
</dbReference>
<dbReference type="GO" id="GO:0004176">
    <property type="term" value="F:ATP-dependent peptidase activity"/>
    <property type="evidence" value="ECO:0007669"/>
    <property type="project" value="InterPro"/>
</dbReference>
<dbReference type="GO" id="GO:0004222">
    <property type="term" value="F:metalloendopeptidase activity"/>
    <property type="evidence" value="ECO:0007669"/>
    <property type="project" value="InterPro"/>
</dbReference>
<dbReference type="GO" id="GO:0008270">
    <property type="term" value="F:zinc ion binding"/>
    <property type="evidence" value="ECO:0007669"/>
    <property type="project" value="UniProtKB-UniRule"/>
</dbReference>
<dbReference type="GO" id="GO:0030163">
    <property type="term" value="P:protein catabolic process"/>
    <property type="evidence" value="ECO:0007669"/>
    <property type="project" value="UniProtKB-UniRule"/>
</dbReference>
<dbReference type="GO" id="GO:0006508">
    <property type="term" value="P:proteolysis"/>
    <property type="evidence" value="ECO:0007669"/>
    <property type="project" value="UniProtKB-KW"/>
</dbReference>
<dbReference type="CDD" id="cd19501">
    <property type="entry name" value="RecA-like_FtsH"/>
    <property type="match status" value="1"/>
</dbReference>
<dbReference type="FunFam" id="1.10.8.60:FF:000001">
    <property type="entry name" value="ATP-dependent zinc metalloprotease FtsH"/>
    <property type="match status" value="1"/>
</dbReference>
<dbReference type="FunFam" id="1.20.58.760:FF:000001">
    <property type="entry name" value="ATP-dependent zinc metalloprotease FtsH"/>
    <property type="match status" value="1"/>
</dbReference>
<dbReference type="FunFam" id="3.40.50.300:FF:000001">
    <property type="entry name" value="ATP-dependent zinc metalloprotease FtsH"/>
    <property type="match status" value="1"/>
</dbReference>
<dbReference type="Gene3D" id="1.10.8.60">
    <property type="match status" value="1"/>
</dbReference>
<dbReference type="Gene3D" id="3.30.720.210">
    <property type="match status" value="1"/>
</dbReference>
<dbReference type="Gene3D" id="3.40.50.300">
    <property type="entry name" value="P-loop containing nucleotide triphosphate hydrolases"/>
    <property type="match status" value="1"/>
</dbReference>
<dbReference type="Gene3D" id="1.20.58.760">
    <property type="entry name" value="Peptidase M41"/>
    <property type="match status" value="1"/>
</dbReference>
<dbReference type="HAMAP" id="MF_01458">
    <property type="entry name" value="FtsH"/>
    <property type="match status" value="1"/>
</dbReference>
<dbReference type="InterPro" id="IPR003593">
    <property type="entry name" value="AAA+_ATPase"/>
</dbReference>
<dbReference type="InterPro" id="IPR041569">
    <property type="entry name" value="AAA_lid_3"/>
</dbReference>
<dbReference type="InterPro" id="IPR003959">
    <property type="entry name" value="ATPase_AAA_core"/>
</dbReference>
<dbReference type="InterPro" id="IPR003960">
    <property type="entry name" value="ATPase_AAA_CS"/>
</dbReference>
<dbReference type="InterPro" id="IPR005936">
    <property type="entry name" value="FtsH"/>
</dbReference>
<dbReference type="InterPro" id="IPR027417">
    <property type="entry name" value="P-loop_NTPase"/>
</dbReference>
<dbReference type="InterPro" id="IPR011546">
    <property type="entry name" value="Pept_M41_FtsH_extracell"/>
</dbReference>
<dbReference type="InterPro" id="IPR000642">
    <property type="entry name" value="Peptidase_M41"/>
</dbReference>
<dbReference type="InterPro" id="IPR037219">
    <property type="entry name" value="Peptidase_M41-like"/>
</dbReference>
<dbReference type="NCBIfam" id="TIGR01241">
    <property type="entry name" value="FtsH_fam"/>
    <property type="match status" value="1"/>
</dbReference>
<dbReference type="PANTHER" id="PTHR23076:SF97">
    <property type="entry name" value="ATP-DEPENDENT ZINC METALLOPROTEASE YME1L1"/>
    <property type="match status" value="1"/>
</dbReference>
<dbReference type="PANTHER" id="PTHR23076">
    <property type="entry name" value="METALLOPROTEASE M41 FTSH"/>
    <property type="match status" value="1"/>
</dbReference>
<dbReference type="Pfam" id="PF00004">
    <property type="entry name" value="AAA"/>
    <property type="match status" value="1"/>
</dbReference>
<dbReference type="Pfam" id="PF17862">
    <property type="entry name" value="AAA_lid_3"/>
    <property type="match status" value="1"/>
</dbReference>
<dbReference type="Pfam" id="PF06480">
    <property type="entry name" value="FtsH_ext"/>
    <property type="match status" value="1"/>
</dbReference>
<dbReference type="Pfam" id="PF01434">
    <property type="entry name" value="Peptidase_M41"/>
    <property type="match status" value="1"/>
</dbReference>
<dbReference type="SMART" id="SM00382">
    <property type="entry name" value="AAA"/>
    <property type="match status" value="1"/>
</dbReference>
<dbReference type="SUPFAM" id="SSF140990">
    <property type="entry name" value="FtsH protease domain-like"/>
    <property type="match status" value="1"/>
</dbReference>
<dbReference type="SUPFAM" id="SSF52540">
    <property type="entry name" value="P-loop containing nucleoside triphosphate hydrolases"/>
    <property type="match status" value="1"/>
</dbReference>
<dbReference type="PROSITE" id="PS00674">
    <property type="entry name" value="AAA"/>
    <property type="match status" value="1"/>
</dbReference>
<accession>A0LN68</accession>
<sequence>MARKSDEDTNPMDKFMDRLRGSPGDGGPGRPDPSQRKVHFSIWYFILALLLIVWMQTYMGEQQSEKISYSEFKQRVHDGNVQNLVIEHDRITGTMKENDGPGRRFNTIRVEDPELVKQLEAKNIRFSGDVQNPWLGLITWWLLPFAIMIFFWSFLMRRMGGGPQGVLSVGKARVKIFAEKEITITFDDVAGIDEAKGELEEIVQFLKDPGKFQRLGGRIPKGVLLVGAPGTGKTLLAKAVAGEAGVPFFSMSGSEFVEMFVGVGAARVRDLFGQAKDHAPCIIFIDELDALGKARGLNPIGGHDEREQTLNQLLVEMDGFDPRSGVIIMAATNRPEILDPALLRPGRFDRHVAIDKPDIRGREAILRVHVKEVKLGSEVDLKKIAGMTPGFVGADLANLVNEAALVAARRDRDEVTMADFQEAADRIIGGLEKKNRAMNPKEKEIVAYHEAGHALVAMLLPNVDPVNKVSIIPRGIAALGYTQQLPTEDRYLMTRNELLDRLQVLLGGRVSEEIIFGDVSTGAQNDLQRATDIARSMVMEYGMSERLGPLTYTRDPRSAHLDLGLGSRERDYSEMIAQEIDEEITRIVEDAHEKVRATLKRERGCLEKLAKILLEKESIDGEELKQFCQEVKSHIARDPVQVEGGAA</sequence>
<name>FTSH_SYNFM</name>
<evidence type="ECO:0000255" key="1">
    <source>
        <dbReference type="HAMAP-Rule" id="MF_01458"/>
    </source>
</evidence>
<evidence type="ECO:0000256" key="2">
    <source>
        <dbReference type="SAM" id="MobiDB-lite"/>
    </source>
</evidence>
<feature type="chain" id="PRO_0000400405" description="ATP-dependent zinc metalloprotease FtsH">
    <location>
        <begin position="1"/>
        <end position="647"/>
    </location>
</feature>
<feature type="topological domain" description="Cytoplasmic" evidence="1">
    <location>
        <begin position="1"/>
        <end position="39"/>
    </location>
</feature>
<feature type="transmembrane region" description="Helical" evidence="1">
    <location>
        <begin position="40"/>
        <end position="60"/>
    </location>
</feature>
<feature type="topological domain" description="Periplasmic" evidence="1">
    <location>
        <begin position="61"/>
        <end position="134"/>
    </location>
</feature>
<feature type="transmembrane region" description="Helical" evidence="1">
    <location>
        <begin position="135"/>
        <end position="155"/>
    </location>
</feature>
<feature type="topological domain" description="Cytoplasmic" evidence="1">
    <location>
        <begin position="156"/>
        <end position="647"/>
    </location>
</feature>
<feature type="region of interest" description="Disordered" evidence="2">
    <location>
        <begin position="1"/>
        <end position="33"/>
    </location>
</feature>
<feature type="active site" evidence="1">
    <location>
        <position position="450"/>
    </location>
</feature>
<feature type="binding site" evidence="1">
    <location>
        <begin position="227"/>
        <end position="234"/>
    </location>
    <ligand>
        <name>ATP</name>
        <dbReference type="ChEBI" id="CHEBI:30616"/>
    </ligand>
</feature>
<feature type="binding site" evidence="1">
    <location>
        <position position="449"/>
    </location>
    <ligand>
        <name>Zn(2+)</name>
        <dbReference type="ChEBI" id="CHEBI:29105"/>
        <note>catalytic</note>
    </ligand>
</feature>
<feature type="binding site" evidence="1">
    <location>
        <position position="453"/>
    </location>
    <ligand>
        <name>Zn(2+)</name>
        <dbReference type="ChEBI" id="CHEBI:29105"/>
        <note>catalytic</note>
    </ligand>
</feature>
<feature type="binding site" evidence="1">
    <location>
        <position position="526"/>
    </location>
    <ligand>
        <name>Zn(2+)</name>
        <dbReference type="ChEBI" id="CHEBI:29105"/>
        <note>catalytic</note>
    </ligand>
</feature>